<protein>
    <recommendedName>
        <fullName>Neurofilament medium polypeptide</fullName>
        <shortName>NF-M</shortName>
    </recommendedName>
    <alternativeName>
        <fullName>160 kDa neurofilament protein</fullName>
    </alternativeName>
    <alternativeName>
        <fullName>Neurofilament 3</fullName>
    </alternativeName>
    <alternativeName>
        <fullName>Neurofilament triplet M protein</fullName>
    </alternativeName>
</protein>
<dbReference type="EMBL" id="Z47378">
    <property type="protein sequence ID" value="CAA87454.1"/>
    <property type="molecule type" value="mRNA"/>
</dbReference>
<dbReference type="PIR" id="S55395">
    <property type="entry name" value="S55395"/>
</dbReference>
<dbReference type="SMR" id="P54938"/>
<dbReference type="FunCoup" id="P54938">
    <property type="interactions" value="15"/>
</dbReference>
<dbReference type="STRING" id="9986.ENSOCUP00000018944"/>
<dbReference type="GlyCosmos" id="P54938">
    <property type="glycosylation" value="1 site, No reported glycans"/>
</dbReference>
<dbReference type="eggNOG" id="KOG1216">
    <property type="taxonomic scope" value="Eukaryota"/>
</dbReference>
<dbReference type="InParanoid" id="P54938"/>
<dbReference type="Proteomes" id="UP000001811">
    <property type="component" value="Unplaced"/>
</dbReference>
<dbReference type="GO" id="GO:0030424">
    <property type="term" value="C:axon"/>
    <property type="evidence" value="ECO:0007669"/>
    <property type="project" value="UniProtKB-SubCell"/>
</dbReference>
<dbReference type="GO" id="GO:0005883">
    <property type="term" value="C:neurofilament"/>
    <property type="evidence" value="ECO:0007669"/>
    <property type="project" value="TreeGrafter"/>
</dbReference>
<dbReference type="GO" id="GO:0099184">
    <property type="term" value="F:structural constituent of postsynaptic intermediate filament cytoskeleton"/>
    <property type="evidence" value="ECO:0007669"/>
    <property type="project" value="TreeGrafter"/>
</dbReference>
<dbReference type="GO" id="GO:0061564">
    <property type="term" value="P:axon development"/>
    <property type="evidence" value="ECO:0007669"/>
    <property type="project" value="TreeGrafter"/>
</dbReference>
<dbReference type="GO" id="GO:0045110">
    <property type="term" value="P:intermediate filament bundle assembly"/>
    <property type="evidence" value="ECO:0007669"/>
    <property type="project" value="TreeGrafter"/>
</dbReference>
<dbReference type="FunFam" id="1.20.5.170:FF:000002">
    <property type="entry name" value="Type I keratin KA11"/>
    <property type="match status" value="1"/>
</dbReference>
<dbReference type="FunFam" id="1.20.5.500:FF:000001">
    <property type="entry name" value="Type II keratin 23"/>
    <property type="match status" value="1"/>
</dbReference>
<dbReference type="Gene3D" id="1.20.5.170">
    <property type="match status" value="1"/>
</dbReference>
<dbReference type="Gene3D" id="1.20.5.500">
    <property type="entry name" value="Single helix bin"/>
    <property type="match status" value="1"/>
</dbReference>
<dbReference type="Gene3D" id="1.20.5.1160">
    <property type="entry name" value="Vasodilator-stimulated phosphoprotein"/>
    <property type="match status" value="1"/>
</dbReference>
<dbReference type="InterPro" id="IPR018039">
    <property type="entry name" value="IF_conserved"/>
</dbReference>
<dbReference type="InterPro" id="IPR039008">
    <property type="entry name" value="IF_rod_dom"/>
</dbReference>
<dbReference type="PANTHER" id="PTHR23214:SF1">
    <property type="entry name" value="NEUROFILAMENT HEAVY POLYPEPTIDE"/>
    <property type="match status" value="1"/>
</dbReference>
<dbReference type="PANTHER" id="PTHR23214">
    <property type="entry name" value="NEUROFILAMENT TRIPLET H PROTEIN"/>
    <property type="match status" value="1"/>
</dbReference>
<dbReference type="Pfam" id="PF00038">
    <property type="entry name" value="Filament"/>
    <property type="match status" value="1"/>
</dbReference>
<dbReference type="SMART" id="SM01391">
    <property type="entry name" value="Filament"/>
    <property type="match status" value="1"/>
</dbReference>
<dbReference type="SUPFAM" id="SSF64593">
    <property type="entry name" value="Intermediate filament protein, coiled coil region"/>
    <property type="match status" value="1"/>
</dbReference>
<dbReference type="PROSITE" id="PS00226">
    <property type="entry name" value="IF_ROD_1"/>
    <property type="match status" value="1"/>
</dbReference>
<dbReference type="PROSITE" id="PS51842">
    <property type="entry name" value="IF_ROD_2"/>
    <property type="match status" value="1"/>
</dbReference>
<accession>P54938</accession>
<proteinExistence type="evidence at transcript level"/>
<gene>
    <name type="primary">NEFM</name>
    <name type="synonym">NEF3</name>
    <name type="synonym">NFM</name>
</gene>
<name>NFM_RABIT</name>
<evidence type="ECO:0000250" key="1"/>
<evidence type="ECO:0000250" key="2">
    <source>
        <dbReference type="UniProtKB" id="O77788"/>
    </source>
</evidence>
<evidence type="ECO:0000250" key="3">
    <source>
        <dbReference type="UniProtKB" id="P08553"/>
    </source>
</evidence>
<evidence type="ECO:0000250" key="4">
    <source>
        <dbReference type="UniProtKB" id="P12839"/>
    </source>
</evidence>
<evidence type="ECO:0000255" key="5">
    <source>
        <dbReference type="PROSITE-ProRule" id="PRU01188"/>
    </source>
</evidence>
<evidence type="ECO:0000256" key="6">
    <source>
        <dbReference type="SAM" id="MobiDB-lite"/>
    </source>
</evidence>
<feature type="chain" id="PRO_0000063797" description="Neurofilament medium polypeptide">
    <location>
        <begin position="1" status="less than"/>
        <end position="644"/>
    </location>
</feature>
<feature type="domain" description="IF rod" evidence="5">
    <location>
        <begin position="1" status="less than"/>
        <end position="197"/>
    </location>
</feature>
<feature type="region of interest" description="Coil 1B">
    <location>
        <begin position="1" status="less than"/>
        <end position="33"/>
    </location>
</feature>
<feature type="region of interest" description="Linker 12">
    <location>
        <begin position="34"/>
        <end position="50"/>
    </location>
</feature>
<feature type="region of interest" description="Coil 2A">
    <location>
        <begin position="51"/>
        <end position="72"/>
    </location>
</feature>
<feature type="region of interest" description="Linker 2">
    <location>
        <begin position="73"/>
        <end position="76"/>
    </location>
</feature>
<feature type="region of interest" description="Coil 2B">
    <location>
        <begin position="77"/>
        <end position="197"/>
    </location>
</feature>
<feature type="region of interest" description="Tail">
    <location>
        <begin position="198"/>
        <end position="643"/>
    </location>
</feature>
<feature type="region of interest" description="Disordered" evidence="6">
    <location>
        <begin position="270"/>
        <end position="582"/>
    </location>
</feature>
<feature type="compositionally biased region" description="Acidic residues" evidence="6">
    <location>
        <begin position="274"/>
        <end position="292"/>
    </location>
</feature>
<feature type="compositionally biased region" description="Acidic residues" evidence="6">
    <location>
        <begin position="308"/>
        <end position="328"/>
    </location>
</feature>
<feature type="compositionally biased region" description="Basic and acidic residues" evidence="6">
    <location>
        <begin position="329"/>
        <end position="350"/>
    </location>
</feature>
<feature type="compositionally biased region" description="Acidic residues" evidence="6">
    <location>
        <begin position="351"/>
        <end position="368"/>
    </location>
</feature>
<feature type="compositionally biased region" description="Basic and acidic residues" evidence="6">
    <location>
        <begin position="369"/>
        <end position="400"/>
    </location>
</feature>
<feature type="compositionally biased region" description="Basic and acidic residues" evidence="6">
    <location>
        <begin position="422"/>
        <end position="470"/>
    </location>
</feature>
<feature type="compositionally biased region" description="Low complexity" evidence="6">
    <location>
        <begin position="474"/>
        <end position="483"/>
    </location>
</feature>
<feature type="compositionally biased region" description="Basic and acidic residues" evidence="6">
    <location>
        <begin position="485"/>
        <end position="508"/>
    </location>
</feature>
<feature type="compositionally biased region" description="Basic and acidic residues" evidence="6">
    <location>
        <begin position="545"/>
        <end position="557"/>
    </location>
</feature>
<feature type="compositionally biased region" description="Basic and acidic residues" evidence="6">
    <location>
        <begin position="568"/>
        <end position="582"/>
    </location>
</feature>
<feature type="modified residue" description="Phosphoserine" evidence="3">
    <location>
        <position position="11"/>
    </location>
</feature>
<feature type="modified residue" description="Phosphotyrosine" evidence="3">
    <location>
        <position position="105"/>
    </location>
</feature>
<feature type="modified residue" description="Phosphoserine" evidence="4">
    <location>
        <position position="131"/>
    </location>
</feature>
<feature type="modified residue" description="Phosphoserine" evidence="4">
    <location>
        <position position="203"/>
    </location>
</feature>
<feature type="modified residue" description="Phosphoserine" evidence="4">
    <location>
        <position position="215"/>
    </location>
</feature>
<feature type="modified residue" description="Phosphoserine" evidence="4">
    <location>
        <position position="253"/>
    </location>
</feature>
<feature type="modified residue" description="Phosphoserine" evidence="4">
    <location>
        <position position="269"/>
    </location>
</feature>
<feature type="modified residue" description="Phosphoserine" evidence="2">
    <location>
        <position position="298"/>
    </location>
</feature>
<feature type="modified residue" description="Phosphoserine" evidence="2">
    <location>
        <position position="332"/>
    </location>
</feature>
<feature type="modified residue" description="Phosphoserine" evidence="2">
    <location>
        <position position="340"/>
    </location>
</feature>
<feature type="modified residue" description="Phosphoserine" evidence="3">
    <location>
        <position position="345"/>
    </location>
</feature>
<feature type="modified residue" description="Phosphoserine" evidence="2">
    <location>
        <position position="346"/>
    </location>
</feature>
<feature type="modified residue" description="Phosphothreonine" evidence="3">
    <location>
        <position position="357"/>
    </location>
</feature>
<feature type="modified residue" description="Phosphoserine" evidence="3">
    <location>
        <position position="401"/>
    </location>
</feature>
<feature type="modified residue" description="Phosphoserine" evidence="2">
    <location>
        <position position="406"/>
    </location>
</feature>
<feature type="modified residue" description="Phosphoserine" evidence="2">
    <location>
        <position position="442"/>
    </location>
</feature>
<feature type="modified residue" description="Phosphoserine" evidence="2">
    <location>
        <position position="465"/>
    </location>
</feature>
<feature type="modified residue" description="Phosphoserine" evidence="3">
    <location>
        <position position="512"/>
    </location>
</feature>
<feature type="modified residue" description="Phosphoserine" evidence="4">
    <location>
        <position position="550"/>
    </location>
</feature>
<feature type="modified residue" description="Phosphoserine" evidence="2">
    <location>
        <position position="566"/>
    </location>
</feature>
<feature type="glycosylation site" description="O-linked (GlcNAc) threonine" evidence="1">
    <location>
        <position position="217"/>
    </location>
</feature>
<feature type="non-terminal residue">
    <location>
        <position position="1"/>
    </location>
</feature>
<organism>
    <name type="scientific">Oryctolagus cuniculus</name>
    <name type="common">Rabbit</name>
    <dbReference type="NCBI Taxonomy" id="9986"/>
    <lineage>
        <taxon>Eukaryota</taxon>
        <taxon>Metazoa</taxon>
        <taxon>Chordata</taxon>
        <taxon>Craniata</taxon>
        <taxon>Vertebrata</taxon>
        <taxon>Euteleostomi</taxon>
        <taxon>Mammalia</taxon>
        <taxon>Eutheria</taxon>
        <taxon>Euarchontoglires</taxon>
        <taxon>Glires</taxon>
        <taxon>Lagomorpha</taxon>
        <taxon>Leporidae</taxon>
        <taxon>Oryctolagus</taxon>
    </lineage>
</organism>
<reference key="1">
    <citation type="journal article" date="1996" name="J. Mol. Cell. Cardiol.">
        <title>Neurofilament M mRNA is expressed in conduction system myocytes of the developing and adult rabbit heart.</title>
        <authorList>
            <person name="Vitadello M."/>
            <person name="Vettore S."/>
            <person name="Lamar E."/>
            <person name="Chien K.R."/>
            <person name="Gorza L."/>
        </authorList>
    </citation>
    <scope>NUCLEOTIDE SEQUENCE [MRNA]</scope>
    <source>
        <tissue>Heart</tissue>
    </source>
</reference>
<sequence>VKVELDKKVQSLQDEVAFLRTNHEEEVADLLAQIQASHITVERKDYLKTDISSALKEIRSQLECHSDQNMHQAEEWFKCRYAKLTEAAEQNKEAIRSAKEEIAEYRRQLQSKSIELESVAWHKESLERHVSDIEERHNHDLSSYQDTIQQLENELRGTKWEMARHLREYQDLLNVKMALDIEIAAYRKLLEGEETRFSTFSGSITGPLYTHRQPSVTISSKIQKTKVEAPKLKVQHKFVEEIIEETKVEDEKSEMEDALTAIAEELAVSVKEEEKEEEAEGKEEEQEAEEEVAAAKKSPVKATTPEIKEEEGEKEEEGQEEEEEEEDEGVKSDQAEEGGSEKEGSSKNEGEQEEGETEAEGEVEEAEAKEEKKTEEKSEEVAAKEEPVTEAKVGKPEKAKSPVPKSPVEEVKPKAEATAGKGEQKEEEEKVEEEKKKAAKESPKEEKVEKKEEKPKDVPKKKAESPVKEEAAEEAATITKPTKVGLEKETKEGEKPLQQEKEKEKAGEEGGSEEEGSDQGSKRAKKEDIAVNGEGEGKEEEEPETKEKGSGREEEKGVVTNGLDLSPADEKKGGDRSEEKVVVTKKVEKITTEGGDGATKYITKSVTAQKVEEHEETFEEKLVSTKKVEKVTSHAIVKEVTQSD</sequence>
<keyword id="KW-0966">Cell projection</keyword>
<keyword id="KW-0175">Coiled coil</keyword>
<keyword id="KW-0963">Cytoplasm</keyword>
<keyword id="KW-0206">Cytoskeleton</keyword>
<keyword id="KW-0325">Glycoprotein</keyword>
<keyword id="KW-0403">Intermediate filament</keyword>
<keyword id="KW-0597">Phosphoprotein</keyword>
<keyword id="KW-1185">Reference proteome</keyword>
<comment type="function">
    <text evidence="3">Neurofilaments usually contain three intermediate filament proteins: NEFL, NEFM, and NEFH which are involved in the maintenance of neuronal caliber. May additionally cooperate with the neuronal intermediate filament proteins PRPH and INA to form neuronal filamentous networks (By similarity).</text>
</comment>
<comment type="subunit">
    <text evidence="4">Forms heterodimers with NEFL; which can further hetero-oligomerize (in vitro) (By similarity). Forms heterodimers with INA (in vitro) (By similarity).</text>
</comment>
<comment type="subcellular location">
    <subcellularLocation>
        <location evidence="3">Cytoplasm</location>
        <location evidence="3">Cytoskeleton</location>
    </subcellularLocation>
    <subcellularLocation>
        <location evidence="3">Cell projection</location>
        <location evidence="3">Axon</location>
    </subcellularLocation>
</comment>
<comment type="PTM">
    <text>There are a number of repeats of the tripeptide K-S-P, NFM is phosphorylated on a number of the serines in this motif. It is thought that phosphorylation of NFM results in the formation of interfilament cross bridges that are important in the maintenance of axonal caliber.</text>
</comment>
<comment type="PTM">
    <text>Phosphorylation seems to play a major role in the functioning of the larger neurofilament polypeptides (NF-M and NF-H), the levels of phosphorylation being altered developmentally and coincidentally with a change in the neurofilament function.</text>
</comment>
<comment type="PTM">
    <text evidence="1">Phosphorylated in the head and rod regions by the PKC kinase PKN1, leading to the inhibition of polymerization.</text>
</comment>
<comment type="similarity">
    <text evidence="5">Belongs to the intermediate filament family.</text>
</comment>